<accession>P15567</accession>
<reference key="1">
    <citation type="journal article" date="1988" name="J. Mol. Biol.">
        <title>DNA sequence analysis of the ade6 gene of Schizosaccharomyces pombe. Wild-type and mutant alleles including the recombination host spot allele ade6-M26.</title>
        <authorList>
            <person name="Szankasi P."/>
            <person name="Heyer W.-D."/>
            <person name="Schuchert P."/>
            <person name="Kohli J."/>
        </authorList>
    </citation>
    <scope>NUCLEOTIDE SEQUENCE [GENOMIC DNA]</scope>
</reference>
<reference key="2">
    <citation type="journal article" date="2002" name="Nature">
        <title>The genome sequence of Schizosaccharomyces pombe.</title>
        <authorList>
            <person name="Wood V."/>
            <person name="Gwilliam R."/>
            <person name="Rajandream M.A."/>
            <person name="Lyne M.H."/>
            <person name="Lyne R."/>
            <person name="Stewart A."/>
            <person name="Sgouros J.G."/>
            <person name="Peat N."/>
            <person name="Hayles J."/>
            <person name="Baker S.G."/>
            <person name="Basham D."/>
            <person name="Bowman S."/>
            <person name="Brooks K."/>
            <person name="Brown D."/>
            <person name="Brown S."/>
            <person name="Chillingworth T."/>
            <person name="Churcher C.M."/>
            <person name="Collins M."/>
            <person name="Connor R."/>
            <person name="Cronin A."/>
            <person name="Davis P."/>
            <person name="Feltwell T."/>
            <person name="Fraser A."/>
            <person name="Gentles S."/>
            <person name="Goble A."/>
            <person name="Hamlin N."/>
            <person name="Harris D.E."/>
            <person name="Hidalgo J."/>
            <person name="Hodgson G."/>
            <person name="Holroyd S."/>
            <person name="Hornsby T."/>
            <person name="Howarth S."/>
            <person name="Huckle E.J."/>
            <person name="Hunt S."/>
            <person name="Jagels K."/>
            <person name="James K.D."/>
            <person name="Jones L."/>
            <person name="Jones M."/>
            <person name="Leather S."/>
            <person name="McDonald S."/>
            <person name="McLean J."/>
            <person name="Mooney P."/>
            <person name="Moule S."/>
            <person name="Mungall K.L."/>
            <person name="Murphy L.D."/>
            <person name="Niblett D."/>
            <person name="Odell C."/>
            <person name="Oliver K."/>
            <person name="O'Neil S."/>
            <person name="Pearson D."/>
            <person name="Quail M.A."/>
            <person name="Rabbinowitsch E."/>
            <person name="Rutherford K.M."/>
            <person name="Rutter S."/>
            <person name="Saunders D."/>
            <person name="Seeger K."/>
            <person name="Sharp S."/>
            <person name="Skelton J."/>
            <person name="Simmonds M.N."/>
            <person name="Squares R."/>
            <person name="Squares S."/>
            <person name="Stevens K."/>
            <person name="Taylor K."/>
            <person name="Taylor R.G."/>
            <person name="Tivey A."/>
            <person name="Walsh S.V."/>
            <person name="Warren T."/>
            <person name="Whitehead S."/>
            <person name="Woodward J.R."/>
            <person name="Volckaert G."/>
            <person name="Aert R."/>
            <person name="Robben J."/>
            <person name="Grymonprez B."/>
            <person name="Weltjens I."/>
            <person name="Vanstreels E."/>
            <person name="Rieger M."/>
            <person name="Schaefer M."/>
            <person name="Mueller-Auer S."/>
            <person name="Gabel C."/>
            <person name="Fuchs M."/>
            <person name="Duesterhoeft A."/>
            <person name="Fritzc C."/>
            <person name="Holzer E."/>
            <person name="Moestl D."/>
            <person name="Hilbert H."/>
            <person name="Borzym K."/>
            <person name="Langer I."/>
            <person name="Beck A."/>
            <person name="Lehrach H."/>
            <person name="Reinhardt R."/>
            <person name="Pohl T.M."/>
            <person name="Eger P."/>
            <person name="Zimmermann W."/>
            <person name="Wedler H."/>
            <person name="Wambutt R."/>
            <person name="Purnelle B."/>
            <person name="Goffeau A."/>
            <person name="Cadieu E."/>
            <person name="Dreano S."/>
            <person name="Gloux S."/>
            <person name="Lelaure V."/>
            <person name="Mottier S."/>
            <person name="Galibert F."/>
            <person name="Aves S.J."/>
            <person name="Xiang Z."/>
            <person name="Hunt C."/>
            <person name="Moore K."/>
            <person name="Hurst S.M."/>
            <person name="Lucas M."/>
            <person name="Rochet M."/>
            <person name="Gaillardin C."/>
            <person name="Tallada V.A."/>
            <person name="Garzon A."/>
            <person name="Thode G."/>
            <person name="Daga R.R."/>
            <person name="Cruzado L."/>
            <person name="Jimenez J."/>
            <person name="Sanchez M."/>
            <person name="del Rey F."/>
            <person name="Benito J."/>
            <person name="Dominguez A."/>
            <person name="Revuelta J.L."/>
            <person name="Moreno S."/>
            <person name="Armstrong J."/>
            <person name="Forsburg S.L."/>
            <person name="Cerutti L."/>
            <person name="Lowe T."/>
            <person name="McCombie W.R."/>
            <person name="Paulsen I."/>
            <person name="Potashkin J."/>
            <person name="Shpakovski G.V."/>
            <person name="Ussery D."/>
            <person name="Barrell B.G."/>
            <person name="Nurse P."/>
        </authorList>
    </citation>
    <scope>NUCLEOTIDE SEQUENCE [LARGE SCALE GENOMIC DNA]</scope>
    <source>
        <strain>972 / ATCC 24843</strain>
    </source>
</reference>
<proteinExistence type="inferred from homology"/>
<dbReference type="EC" id="4.1.1.21"/>
<dbReference type="EMBL" id="M37264">
    <property type="protein sequence ID" value="AAA35285.1"/>
    <property type="molecule type" value="Genomic_DNA"/>
</dbReference>
<dbReference type="EMBL" id="X14488">
    <property type="protein sequence ID" value="CAA32650.1"/>
    <property type="molecule type" value="Genomic_DNA"/>
</dbReference>
<dbReference type="EMBL" id="CU329672">
    <property type="protein sequence ID" value="CAA22866.1"/>
    <property type="molecule type" value="Genomic_DNA"/>
</dbReference>
<dbReference type="PIR" id="S02159">
    <property type="entry name" value="DEZPP"/>
</dbReference>
<dbReference type="RefSeq" id="NP_588141.1">
    <property type="nucleotide sequence ID" value="NM_001023131.2"/>
</dbReference>
<dbReference type="SMR" id="P15567"/>
<dbReference type="BioGRID" id="275318">
    <property type="interactions" value="11"/>
</dbReference>
<dbReference type="FunCoup" id="P15567">
    <property type="interactions" value="89"/>
</dbReference>
<dbReference type="STRING" id="284812.P15567"/>
<dbReference type="iPTMnet" id="P15567"/>
<dbReference type="PaxDb" id="4896-SPCC1322.13.1"/>
<dbReference type="EnsemblFungi" id="SPCC1322.13.1">
    <property type="protein sequence ID" value="SPCC1322.13.1:pep"/>
    <property type="gene ID" value="SPCC1322.13"/>
</dbReference>
<dbReference type="GeneID" id="2538734"/>
<dbReference type="KEGG" id="spo:2538734"/>
<dbReference type="PomBase" id="SPCC1322.13">
    <property type="gene designation" value="ade6"/>
</dbReference>
<dbReference type="VEuPathDB" id="FungiDB:SPCC1322.13"/>
<dbReference type="eggNOG" id="KOG2835">
    <property type="taxonomic scope" value="Eukaryota"/>
</dbReference>
<dbReference type="HOGENOM" id="CLU_011534_2_1_1"/>
<dbReference type="InParanoid" id="P15567"/>
<dbReference type="OMA" id="ITFDHEH"/>
<dbReference type="PhylomeDB" id="P15567"/>
<dbReference type="BRENDA" id="4.1.1.21">
    <property type="organism ID" value="5613"/>
</dbReference>
<dbReference type="UniPathway" id="UPA00074">
    <property type="reaction ID" value="UER00130"/>
</dbReference>
<dbReference type="PRO" id="PR:P15567"/>
<dbReference type="Proteomes" id="UP000002485">
    <property type="component" value="Chromosome III"/>
</dbReference>
<dbReference type="GO" id="GO:0005829">
    <property type="term" value="C:cytosol"/>
    <property type="evidence" value="ECO:0007005"/>
    <property type="project" value="PomBase"/>
</dbReference>
<dbReference type="GO" id="GO:0005524">
    <property type="term" value="F:ATP binding"/>
    <property type="evidence" value="ECO:0007669"/>
    <property type="project" value="UniProtKB-KW"/>
</dbReference>
<dbReference type="GO" id="GO:0046872">
    <property type="term" value="F:metal ion binding"/>
    <property type="evidence" value="ECO:0007669"/>
    <property type="project" value="InterPro"/>
</dbReference>
<dbReference type="GO" id="GO:0004638">
    <property type="term" value="F:phosphoribosylaminoimidazole carboxylase activity"/>
    <property type="evidence" value="ECO:0000304"/>
    <property type="project" value="PomBase"/>
</dbReference>
<dbReference type="GO" id="GO:0006189">
    <property type="term" value="P:'de novo' IMP biosynthetic process"/>
    <property type="evidence" value="ECO:0000266"/>
    <property type="project" value="PomBase"/>
</dbReference>
<dbReference type="GO" id="GO:0009113">
    <property type="term" value="P:purine nucleobase biosynthetic process"/>
    <property type="evidence" value="ECO:0000266"/>
    <property type="project" value="PomBase"/>
</dbReference>
<dbReference type="FunFam" id="3.40.50.1970:FF:000013">
    <property type="entry name" value="Phosphoribosylaminoimidazole carboxylase"/>
    <property type="match status" value="1"/>
</dbReference>
<dbReference type="FunFam" id="3.40.50.20:FF:000030">
    <property type="entry name" value="Phosphoribosylaminoimidazole carboxylase"/>
    <property type="match status" value="1"/>
</dbReference>
<dbReference type="FunFam" id="3.30.470.20:FF:000037">
    <property type="entry name" value="Phosphoribosylaminoimidazole carboxylase, chloroplastic"/>
    <property type="match status" value="1"/>
</dbReference>
<dbReference type="FunFam" id="3.30.1490.20:FF:000016">
    <property type="entry name" value="phosphoribosylaminoimidazole carboxylase, chloroplastic"/>
    <property type="match status" value="1"/>
</dbReference>
<dbReference type="Gene3D" id="3.40.50.1970">
    <property type="match status" value="1"/>
</dbReference>
<dbReference type="Gene3D" id="3.40.50.20">
    <property type="match status" value="1"/>
</dbReference>
<dbReference type="Gene3D" id="3.30.1490.20">
    <property type="entry name" value="ATP-grasp fold, A domain"/>
    <property type="match status" value="1"/>
</dbReference>
<dbReference type="Gene3D" id="3.30.470.20">
    <property type="entry name" value="ATP-grasp fold, B domain"/>
    <property type="match status" value="1"/>
</dbReference>
<dbReference type="HAMAP" id="MF_01929">
    <property type="entry name" value="PurE_classI"/>
    <property type="match status" value="1"/>
</dbReference>
<dbReference type="HAMAP" id="MF_01928">
    <property type="entry name" value="PurK"/>
    <property type="match status" value="1"/>
</dbReference>
<dbReference type="InterPro" id="IPR016301">
    <property type="entry name" value="Ade2_fungi/plant"/>
</dbReference>
<dbReference type="InterPro" id="IPR011761">
    <property type="entry name" value="ATP-grasp"/>
</dbReference>
<dbReference type="InterPro" id="IPR003135">
    <property type="entry name" value="ATP-grasp_carboxylate-amine"/>
</dbReference>
<dbReference type="InterPro" id="IPR013815">
    <property type="entry name" value="ATP_grasp_subdomain_1"/>
</dbReference>
<dbReference type="InterPro" id="IPR016185">
    <property type="entry name" value="PreATP-grasp_dom_sf"/>
</dbReference>
<dbReference type="InterPro" id="IPR033747">
    <property type="entry name" value="PurE_ClassI"/>
</dbReference>
<dbReference type="InterPro" id="IPR000031">
    <property type="entry name" value="PurE_dom"/>
</dbReference>
<dbReference type="InterPro" id="IPR005875">
    <property type="entry name" value="PurK"/>
</dbReference>
<dbReference type="InterPro" id="IPR040686">
    <property type="entry name" value="PurK_C"/>
</dbReference>
<dbReference type="InterPro" id="IPR054350">
    <property type="entry name" value="PurT/PurK_preATP-grasp"/>
</dbReference>
<dbReference type="InterPro" id="IPR011054">
    <property type="entry name" value="Rudment_hybrid_motif"/>
</dbReference>
<dbReference type="NCBIfam" id="NF004679">
    <property type="entry name" value="PRK06019.1-5"/>
    <property type="match status" value="1"/>
</dbReference>
<dbReference type="NCBIfam" id="TIGR01162">
    <property type="entry name" value="purE"/>
    <property type="match status" value="1"/>
</dbReference>
<dbReference type="NCBIfam" id="TIGR01161">
    <property type="entry name" value="purK"/>
    <property type="match status" value="1"/>
</dbReference>
<dbReference type="PANTHER" id="PTHR11609:SF5">
    <property type="entry name" value="PHOSPHORIBOSYLAMINOIMIDAZOLE CARBOXYLASE"/>
    <property type="match status" value="1"/>
</dbReference>
<dbReference type="PANTHER" id="PTHR11609">
    <property type="entry name" value="PURINE BIOSYNTHESIS PROTEIN 6/7, PUR6/7"/>
    <property type="match status" value="1"/>
</dbReference>
<dbReference type="Pfam" id="PF00731">
    <property type="entry name" value="AIRC"/>
    <property type="match status" value="1"/>
</dbReference>
<dbReference type="Pfam" id="PF02222">
    <property type="entry name" value="ATP-grasp"/>
    <property type="match status" value="1"/>
</dbReference>
<dbReference type="Pfam" id="PF17769">
    <property type="entry name" value="PurK_C"/>
    <property type="match status" value="1"/>
</dbReference>
<dbReference type="Pfam" id="PF22660">
    <property type="entry name" value="RS_preATP-grasp-like"/>
    <property type="match status" value="1"/>
</dbReference>
<dbReference type="PIRSF" id="PIRSF001340">
    <property type="entry name" value="AIR_carboxylase"/>
    <property type="match status" value="1"/>
</dbReference>
<dbReference type="SMART" id="SM01001">
    <property type="entry name" value="AIRC"/>
    <property type="match status" value="1"/>
</dbReference>
<dbReference type="SUPFAM" id="SSF56059">
    <property type="entry name" value="Glutathione synthetase ATP-binding domain-like"/>
    <property type="match status" value="1"/>
</dbReference>
<dbReference type="SUPFAM" id="SSF52255">
    <property type="entry name" value="N5-CAIR mutase (phosphoribosylaminoimidazole carboxylase, PurE)"/>
    <property type="match status" value="1"/>
</dbReference>
<dbReference type="SUPFAM" id="SSF52440">
    <property type="entry name" value="PreATP-grasp domain"/>
    <property type="match status" value="1"/>
</dbReference>
<dbReference type="SUPFAM" id="SSF51246">
    <property type="entry name" value="Rudiment single hybrid motif"/>
    <property type="match status" value="1"/>
</dbReference>
<dbReference type="PROSITE" id="PS50975">
    <property type="entry name" value="ATP_GRASP"/>
    <property type="match status" value="1"/>
</dbReference>
<evidence type="ECO:0000255" key="1">
    <source>
        <dbReference type="PROSITE-ProRule" id="PRU00409"/>
    </source>
</evidence>
<evidence type="ECO:0000305" key="2"/>
<organism>
    <name type="scientific">Schizosaccharomyces pombe (strain 972 / ATCC 24843)</name>
    <name type="common">Fission yeast</name>
    <dbReference type="NCBI Taxonomy" id="284812"/>
    <lineage>
        <taxon>Eukaryota</taxon>
        <taxon>Fungi</taxon>
        <taxon>Dikarya</taxon>
        <taxon>Ascomycota</taxon>
        <taxon>Taphrinomycotina</taxon>
        <taxon>Schizosaccharomycetes</taxon>
        <taxon>Schizosaccharomycetales</taxon>
        <taxon>Schizosaccharomycetaceae</taxon>
        <taxon>Schizosaccharomyces</taxon>
    </lineage>
</organism>
<sequence>MSEKQVVGILGGGQLGRMMVEAAHRLNIKCIILDAANSPAKQIDGGREHIDASFTDPDAIVELSKKCTLLTTEIEHINTDALAAVTKSVAVEPSPATLRCIQDKYLQKQHLQVFKIALPEFCDAPDQESVEKAGQEFGYPFVLKSKTLAYDGRGNYVVHQPSEIPTAIKALGDRPLYVEKFVPFSMEIAVMVVRSLDGKVYAYPTTETIQKDNVCHLVYAPARLPFSIQQRAQTLAMDAVRTFEGAGIYGVEMFVLQDGETILLNEIAPRPHNSGHYTIEACPTSQFEAHLRAICGLPFSEINTQLSTSTTHALMVNILGTDDPDYVSKIAKRSLSIPGATLHLYGKAESRKGRKMGHVTIISDSPQECERRYQMLLDVKDPVESPVVGIIMGSDSDLSKMKDAAVILDEFKVPYELTIVSAHRTPDRMVTYARTAASRGLRVIIAGAGGAAHLPGMVAAMTPLPVIGVPVKGSTLDGVDSLHSIVQMPRGVPVATVAINNSQNAGILACRILATFQPSLLAAMESFMDNMKEIVLEKADKLEKVGWKNYSA</sequence>
<feature type="chain" id="PRO_0000075027" description="Phosphoribosylaminoimidazole carboxylase">
    <location>
        <begin position="1"/>
        <end position="552"/>
    </location>
</feature>
<feature type="domain" description="ATP-grasp" evidence="1">
    <location>
        <begin position="108"/>
        <end position="295"/>
    </location>
</feature>
<feature type="binding site" evidence="1">
    <location>
        <begin position="134"/>
        <end position="189"/>
    </location>
    <ligand>
        <name>ATP</name>
        <dbReference type="ChEBI" id="CHEBI:30616"/>
    </ligand>
</feature>
<comment type="catalytic activity">
    <reaction>
        <text>5-amino-1-(5-phospho-D-ribosyl)imidazole-4-carboxylate + H(+) = 5-amino-1-(5-phospho-beta-D-ribosyl)imidazole + CO2</text>
        <dbReference type="Rhea" id="RHEA:10792"/>
        <dbReference type="ChEBI" id="CHEBI:15378"/>
        <dbReference type="ChEBI" id="CHEBI:16526"/>
        <dbReference type="ChEBI" id="CHEBI:77657"/>
        <dbReference type="ChEBI" id="CHEBI:137981"/>
        <dbReference type="EC" id="4.1.1.21"/>
    </reaction>
</comment>
<comment type="pathway">
    <text>Purine metabolism; IMP biosynthesis via de novo pathway; 5-amino-1-(5-phospho-D-ribosyl)imidazole-4-carboxylate from 5-amino-1-(5-phospho-D-ribosyl)imidazole (carboxylase route): step 1/1.</text>
</comment>
<comment type="similarity">
    <text evidence="2">In the C-terminal section; belongs to the AIR carboxylase family. Class I subfamily.</text>
</comment>
<gene>
    <name type="primary">ade6</name>
    <name type="synonym">min1</name>
    <name type="ORF">SPCC1322.13</name>
</gene>
<keyword id="KW-0067">ATP-binding</keyword>
<keyword id="KW-0210">Decarboxylase</keyword>
<keyword id="KW-0456">Lyase</keyword>
<keyword id="KW-0547">Nucleotide-binding</keyword>
<keyword id="KW-0658">Purine biosynthesis</keyword>
<keyword id="KW-1185">Reference proteome</keyword>
<protein>
    <recommendedName>
        <fullName>Phosphoribosylaminoimidazole carboxylase</fullName>
        <ecNumber>4.1.1.21</ecNumber>
    </recommendedName>
    <alternativeName>
        <fullName>AIR carboxylase</fullName>
        <shortName>AIRC</shortName>
    </alternativeName>
</protein>
<name>PUR6_SCHPO</name>